<sequence>MRQITNLGRNIENKSFSIIDEEAGPHSFAQEEWEVVRRIIHATADFDYKNITKIHPQAIDSGIQALKKGCPIVCDVQMILSGLNPERLKVYGCKTYCFISDEDVIENAKRKNSTRAIESIQKANSFNLLNESIIVIGNAPTALLEIEKLIRQEGIKPALIVGVPVGFVSAKESKESILKLEYYNVTSIPYILTMGRKGGSTIAVAILHALLLLSSKRGER</sequence>
<protein>
    <recommendedName>
        <fullName>Cobalt-precorrin-8 methylmutase</fullName>
        <ecNumber>5.4.99.60</ecNumber>
    </recommendedName>
    <alternativeName>
        <fullName>Cobalt-precorrin isomerase</fullName>
    </alternativeName>
</protein>
<accession>Q8EXP7</accession>
<reference key="1">
    <citation type="journal article" date="2003" name="Nature">
        <title>Unique physiological and pathogenic features of Leptospira interrogans revealed by whole-genome sequencing.</title>
        <authorList>
            <person name="Ren S.-X."/>
            <person name="Fu G."/>
            <person name="Jiang X.-G."/>
            <person name="Zeng R."/>
            <person name="Miao Y.-G."/>
            <person name="Xu H."/>
            <person name="Zhang Y.-X."/>
            <person name="Xiong H."/>
            <person name="Lu G."/>
            <person name="Lu L.-F."/>
            <person name="Jiang H.-Q."/>
            <person name="Jia J."/>
            <person name="Tu Y.-F."/>
            <person name="Jiang J.-X."/>
            <person name="Gu W.-Y."/>
            <person name="Zhang Y.-Q."/>
            <person name="Cai Z."/>
            <person name="Sheng H.-H."/>
            <person name="Yin H.-F."/>
            <person name="Zhang Y."/>
            <person name="Zhu G.-F."/>
            <person name="Wan M."/>
            <person name="Huang H.-L."/>
            <person name="Qian Z."/>
            <person name="Wang S.-Y."/>
            <person name="Ma W."/>
            <person name="Yao Z.-J."/>
            <person name="Shen Y."/>
            <person name="Qiang B.-Q."/>
            <person name="Xia Q.-C."/>
            <person name="Guo X.-K."/>
            <person name="Danchin A."/>
            <person name="Saint Girons I."/>
            <person name="Somerville R.L."/>
            <person name="Wen Y.-M."/>
            <person name="Shi M.-H."/>
            <person name="Chen Z."/>
            <person name="Xu J.-G."/>
            <person name="Zhao G.-P."/>
        </authorList>
    </citation>
    <scope>NUCLEOTIDE SEQUENCE [LARGE SCALE GENOMIC DNA]</scope>
    <source>
        <strain>56601</strain>
    </source>
</reference>
<reference key="2">
    <citation type="journal article" date="2006" name="J. Struct. Biol.">
        <title>The crystal structure of putative precorrin isomerase CbiC in cobalamin biosynthesis.</title>
        <authorList>
            <person name="Xue Y."/>
            <person name="Wei Z."/>
            <person name="Li X."/>
            <person name="Gong W."/>
        </authorList>
    </citation>
    <scope>X-RAY CRYSTALLOGRAPHY (2.30 ANGSTROMS)</scope>
    <scope>SUBUNIT</scope>
</reference>
<gene>
    <name type="primary">cbiC</name>
    <name type="ordered locus">LB_161</name>
</gene>
<proteinExistence type="evidence at protein level"/>
<name>CBIC_LEPIN</name>
<dbReference type="EC" id="5.4.99.60"/>
<dbReference type="EMBL" id="AE010301">
    <property type="protein sequence ID" value="AAN51720.2"/>
    <property type="molecule type" value="Genomic_DNA"/>
</dbReference>
<dbReference type="RefSeq" id="NP_714705.2">
    <property type="nucleotide sequence ID" value="NC_004343.2"/>
</dbReference>
<dbReference type="PDB" id="2AFR">
    <property type="method" value="X-ray"/>
    <property type="resolution" value="2.30 A"/>
    <property type="chains" value="A=1-220"/>
</dbReference>
<dbReference type="PDB" id="2AFV">
    <property type="method" value="X-ray"/>
    <property type="resolution" value="3.00 A"/>
    <property type="chains" value="A/B=1-220"/>
</dbReference>
<dbReference type="PDBsum" id="2AFR"/>
<dbReference type="PDBsum" id="2AFV"/>
<dbReference type="SMR" id="Q8EXP7"/>
<dbReference type="STRING" id="189518.LB_161"/>
<dbReference type="PaxDb" id="189518-LB_161"/>
<dbReference type="EnsemblBacteria" id="AAN51720">
    <property type="protein sequence ID" value="AAN51720"/>
    <property type="gene ID" value="LB_161"/>
</dbReference>
<dbReference type="KEGG" id="lil:LB_161"/>
<dbReference type="PATRIC" id="fig|189518.3.peg.4489"/>
<dbReference type="HOGENOM" id="CLU_084703_1_1_12"/>
<dbReference type="InParanoid" id="Q8EXP7"/>
<dbReference type="OrthoDB" id="9780708at2"/>
<dbReference type="BRENDA" id="5.4.99.60">
    <property type="organism ID" value="2986"/>
</dbReference>
<dbReference type="UniPathway" id="UPA00148">
    <property type="reaction ID" value="UER00230"/>
</dbReference>
<dbReference type="EvolutionaryTrace" id="Q8EXP7"/>
<dbReference type="Proteomes" id="UP000001408">
    <property type="component" value="Chromosome II"/>
</dbReference>
<dbReference type="GO" id="GO:0043778">
    <property type="term" value="F:cobalt-precorrin-8 methylmutase activity"/>
    <property type="evidence" value="ECO:0007669"/>
    <property type="project" value="UniProtKB-EC"/>
</dbReference>
<dbReference type="GO" id="GO:0016993">
    <property type="term" value="F:precorrin-8X methylmutase activity"/>
    <property type="evidence" value="ECO:0007669"/>
    <property type="project" value="InterPro"/>
</dbReference>
<dbReference type="GO" id="GO:0009236">
    <property type="term" value="P:cobalamin biosynthetic process"/>
    <property type="evidence" value="ECO:0007669"/>
    <property type="project" value="UniProtKB-UniPathway"/>
</dbReference>
<dbReference type="Gene3D" id="3.40.50.10230">
    <property type="entry name" value="Cobalamin biosynthesis CobH/CbiC, precorrin-8X methylmutase"/>
    <property type="match status" value="1"/>
</dbReference>
<dbReference type="InterPro" id="IPR003722">
    <property type="entry name" value="Cbl_synth_CobH/CbiC"/>
</dbReference>
<dbReference type="InterPro" id="IPR036588">
    <property type="entry name" value="CobH/CbiC_sf"/>
</dbReference>
<dbReference type="PANTHER" id="PTHR43588">
    <property type="entry name" value="COBALT-PRECORRIN-8 METHYLMUTASE"/>
    <property type="match status" value="1"/>
</dbReference>
<dbReference type="PANTHER" id="PTHR43588:SF1">
    <property type="entry name" value="COBALT-PRECORRIN-8 METHYLMUTASE"/>
    <property type="match status" value="1"/>
</dbReference>
<dbReference type="Pfam" id="PF02570">
    <property type="entry name" value="CbiC"/>
    <property type="match status" value="1"/>
</dbReference>
<dbReference type="SUPFAM" id="SSF63965">
    <property type="entry name" value="Precorrin-8X methylmutase CbiC/CobH"/>
    <property type="match status" value="1"/>
</dbReference>
<comment type="function">
    <text evidence="1">Catalyzes the conversion of cobalt-precorrin-8 to cobyrinate.</text>
</comment>
<comment type="catalytic activity">
    <reaction>
        <text>Co-precorrin-8X = cob(II)yrinate</text>
        <dbReference type="Rhea" id="RHEA:16209"/>
        <dbReference type="ChEBI" id="CHEBI:58894"/>
        <dbReference type="ChEBI" id="CHEBI:70792"/>
        <dbReference type="EC" id="5.4.99.60"/>
    </reaction>
</comment>
<comment type="pathway">
    <text>Cofactor biosynthesis; adenosylcobalamin biosynthesis; cob(II)yrinate a,c-diamide from sirohydrochlorin (anaerobic route): step 9/10.</text>
</comment>
<comment type="subunit">
    <text evidence="2">Homodimer.</text>
</comment>
<comment type="similarity">
    <text evidence="3">Belongs to the CobH/CbiC family.</text>
</comment>
<evidence type="ECO:0000250" key="1"/>
<evidence type="ECO:0000269" key="2">
    <source>
    </source>
</evidence>
<evidence type="ECO:0000305" key="3"/>
<evidence type="ECO:0007829" key="4">
    <source>
        <dbReference type="PDB" id="2AFR"/>
    </source>
</evidence>
<keyword id="KW-0002">3D-structure</keyword>
<keyword id="KW-0169">Cobalamin biosynthesis</keyword>
<keyword id="KW-0413">Isomerase</keyword>
<keyword id="KW-1185">Reference proteome</keyword>
<feature type="chain" id="PRO_0000430345" description="Cobalt-precorrin-8 methylmutase">
    <location>
        <begin position="1"/>
        <end position="220"/>
    </location>
</feature>
<feature type="active site" description="Proton donor/acceptor" evidence="1">
    <location>
        <position position="41"/>
    </location>
</feature>
<feature type="binding site" evidence="1">
    <location>
        <position position="15"/>
    </location>
    <ligand>
        <name>substrate</name>
    </ligand>
</feature>
<feature type="binding site" evidence="1">
    <location>
        <position position="38"/>
    </location>
    <ligand>
        <name>substrate</name>
    </ligand>
</feature>
<feature type="helix" evidence="4">
    <location>
        <begin position="6"/>
        <end position="23"/>
    </location>
</feature>
<feature type="helix" evidence="4">
    <location>
        <begin position="30"/>
        <end position="43"/>
    </location>
</feature>
<feature type="helix" evidence="4">
    <location>
        <begin position="48"/>
        <end position="51"/>
    </location>
</feature>
<feature type="strand" evidence="4">
    <location>
        <begin position="52"/>
        <end position="54"/>
    </location>
</feature>
<feature type="helix" evidence="4">
    <location>
        <begin position="58"/>
        <end position="67"/>
    </location>
</feature>
<feature type="strand" evidence="4">
    <location>
        <begin position="71"/>
        <end position="76"/>
    </location>
</feature>
<feature type="helix" evidence="4">
    <location>
        <begin position="77"/>
        <end position="80"/>
    </location>
</feature>
<feature type="helix" evidence="4">
    <location>
        <begin position="85"/>
        <end position="89"/>
    </location>
</feature>
<feature type="turn" evidence="4">
    <location>
        <begin position="90"/>
        <end position="92"/>
    </location>
</feature>
<feature type="strand" evidence="4">
    <location>
        <begin position="94"/>
        <end position="96"/>
    </location>
</feature>
<feature type="helix" evidence="4">
    <location>
        <begin position="102"/>
        <end position="110"/>
    </location>
</feature>
<feature type="helix" evidence="4">
    <location>
        <begin position="115"/>
        <end position="125"/>
    </location>
</feature>
<feature type="strand" evidence="4">
    <location>
        <begin position="133"/>
        <end position="138"/>
    </location>
</feature>
<feature type="helix" evidence="4">
    <location>
        <begin position="140"/>
        <end position="153"/>
    </location>
</feature>
<feature type="strand" evidence="4">
    <location>
        <begin position="158"/>
        <end position="162"/>
    </location>
</feature>
<feature type="strand" evidence="4">
    <location>
        <begin position="167"/>
        <end position="169"/>
    </location>
</feature>
<feature type="helix" evidence="4">
    <location>
        <begin position="170"/>
        <end position="182"/>
    </location>
</feature>
<feature type="strand" evidence="4">
    <location>
        <begin position="190"/>
        <end position="193"/>
    </location>
</feature>
<feature type="helix" evidence="4">
    <location>
        <begin position="200"/>
        <end position="216"/>
    </location>
</feature>
<organism>
    <name type="scientific">Leptospira interrogans serogroup Icterohaemorrhagiae serovar Lai (strain 56601)</name>
    <dbReference type="NCBI Taxonomy" id="189518"/>
    <lineage>
        <taxon>Bacteria</taxon>
        <taxon>Pseudomonadati</taxon>
        <taxon>Spirochaetota</taxon>
        <taxon>Spirochaetia</taxon>
        <taxon>Leptospirales</taxon>
        <taxon>Leptospiraceae</taxon>
        <taxon>Leptospira</taxon>
    </lineage>
</organism>